<sequence>MDQIRLTHLRQLEAESIHIIREVAAEFSNPVMLYSIGKDSSVMLHLARKAFYPGTLPFPLLHVDTGWKFREMYEFRDRTAKAYGCELLVHQNPEGVAMGINPFVHGSAKHTDIMKTEGLKQALNKYGFDAAFGGARRDEEKSRAKERIYSFRDRFHRWDPKNQRPELWHNYNGQINKGESIRVFPLSNWTEQDIWQYIWLENIDIVPLYLAAERPVLERDGMLMMIDDNRIDLQPGEVIKKRMVRFRTLGCWPLTGAVESNAQTLPEIIEEMLVSTTSERQGRVIDRDQAGSMELKKRQGYF</sequence>
<dbReference type="EC" id="2.7.7.4" evidence="1"/>
<dbReference type="EMBL" id="AE005174">
    <property type="protein sequence ID" value="AAG57859.1"/>
    <property type="molecule type" value="Genomic_DNA"/>
</dbReference>
<dbReference type="EMBL" id="BA000007">
    <property type="protein sequence ID" value="BAB37029.1"/>
    <property type="molecule type" value="Genomic_DNA"/>
</dbReference>
<dbReference type="PIR" id="F91079">
    <property type="entry name" value="F91079"/>
</dbReference>
<dbReference type="PIR" id="G85924">
    <property type="entry name" value="G85924"/>
</dbReference>
<dbReference type="RefSeq" id="NP_311633.1">
    <property type="nucleotide sequence ID" value="NC_002695.1"/>
</dbReference>
<dbReference type="RefSeq" id="WP_000372111.1">
    <property type="nucleotide sequence ID" value="NZ_VOAI01000003.1"/>
</dbReference>
<dbReference type="SMR" id="Q8X7X4"/>
<dbReference type="STRING" id="155864.Z4060"/>
<dbReference type="GeneID" id="914672"/>
<dbReference type="KEGG" id="ece:Z4060"/>
<dbReference type="KEGG" id="ecs:ECs_3606"/>
<dbReference type="PATRIC" id="fig|386585.9.peg.3769"/>
<dbReference type="eggNOG" id="COG0175">
    <property type="taxonomic scope" value="Bacteria"/>
</dbReference>
<dbReference type="HOGENOM" id="CLU_043026_0_0_6"/>
<dbReference type="OMA" id="WQYIHLE"/>
<dbReference type="UniPathway" id="UPA00140">
    <property type="reaction ID" value="UER00204"/>
</dbReference>
<dbReference type="Proteomes" id="UP000000558">
    <property type="component" value="Chromosome"/>
</dbReference>
<dbReference type="Proteomes" id="UP000002519">
    <property type="component" value="Chromosome"/>
</dbReference>
<dbReference type="GO" id="GO:0005524">
    <property type="term" value="F:ATP binding"/>
    <property type="evidence" value="ECO:0007669"/>
    <property type="project" value="UniProtKB-KW"/>
</dbReference>
<dbReference type="GO" id="GO:0004781">
    <property type="term" value="F:sulfate adenylyltransferase (ATP) activity"/>
    <property type="evidence" value="ECO:0007669"/>
    <property type="project" value="UniProtKB-UniRule"/>
</dbReference>
<dbReference type="GO" id="GO:0070814">
    <property type="term" value="P:hydrogen sulfide biosynthetic process"/>
    <property type="evidence" value="ECO:0007669"/>
    <property type="project" value="UniProtKB-UniRule"/>
</dbReference>
<dbReference type="GO" id="GO:0000103">
    <property type="term" value="P:sulfate assimilation"/>
    <property type="evidence" value="ECO:0007669"/>
    <property type="project" value="UniProtKB-UniRule"/>
</dbReference>
<dbReference type="CDD" id="cd23946">
    <property type="entry name" value="Sulfate_adenylyltransferase_2"/>
    <property type="match status" value="1"/>
</dbReference>
<dbReference type="FunFam" id="3.40.50.620:FF:000002">
    <property type="entry name" value="Sulfate adenylyltransferase subunit 2"/>
    <property type="match status" value="1"/>
</dbReference>
<dbReference type="Gene3D" id="3.40.50.620">
    <property type="entry name" value="HUPs"/>
    <property type="match status" value="1"/>
</dbReference>
<dbReference type="HAMAP" id="MF_00064">
    <property type="entry name" value="Sulf_adenylyltr_sub2"/>
    <property type="match status" value="1"/>
</dbReference>
<dbReference type="InterPro" id="IPR002500">
    <property type="entry name" value="PAPS_reduct_dom"/>
</dbReference>
<dbReference type="InterPro" id="IPR014729">
    <property type="entry name" value="Rossmann-like_a/b/a_fold"/>
</dbReference>
<dbReference type="InterPro" id="IPR011784">
    <property type="entry name" value="SO4_adenylTrfase_ssu"/>
</dbReference>
<dbReference type="InterPro" id="IPR050128">
    <property type="entry name" value="Sulfate_adenylyltrnsfr_sub2"/>
</dbReference>
<dbReference type="NCBIfam" id="TIGR02039">
    <property type="entry name" value="CysD"/>
    <property type="match status" value="1"/>
</dbReference>
<dbReference type="NCBIfam" id="NF003587">
    <property type="entry name" value="PRK05253.1"/>
    <property type="match status" value="1"/>
</dbReference>
<dbReference type="NCBIfam" id="NF009214">
    <property type="entry name" value="PRK12563.1"/>
    <property type="match status" value="1"/>
</dbReference>
<dbReference type="PANTHER" id="PTHR43196">
    <property type="entry name" value="SULFATE ADENYLYLTRANSFERASE SUBUNIT 2"/>
    <property type="match status" value="1"/>
</dbReference>
<dbReference type="PANTHER" id="PTHR43196:SF1">
    <property type="entry name" value="SULFATE ADENYLYLTRANSFERASE SUBUNIT 2"/>
    <property type="match status" value="1"/>
</dbReference>
<dbReference type="Pfam" id="PF01507">
    <property type="entry name" value="PAPS_reduct"/>
    <property type="match status" value="1"/>
</dbReference>
<dbReference type="PIRSF" id="PIRSF002936">
    <property type="entry name" value="CysDAde_trans"/>
    <property type="match status" value="1"/>
</dbReference>
<dbReference type="SUPFAM" id="SSF52402">
    <property type="entry name" value="Adenine nucleotide alpha hydrolases-like"/>
    <property type="match status" value="1"/>
</dbReference>
<protein>
    <recommendedName>
        <fullName evidence="1">Sulfate adenylyltransferase subunit 2</fullName>
        <ecNumber evidence="1">2.7.7.4</ecNumber>
    </recommendedName>
    <alternativeName>
        <fullName evidence="1">ATP-sulfurylase small subunit</fullName>
    </alternativeName>
    <alternativeName>
        <fullName evidence="1">Sulfate adenylate transferase</fullName>
        <shortName evidence="1">SAT</shortName>
    </alternativeName>
</protein>
<accession>Q8X7X4</accession>
<reference key="1">
    <citation type="journal article" date="2001" name="Nature">
        <title>Genome sequence of enterohaemorrhagic Escherichia coli O157:H7.</title>
        <authorList>
            <person name="Perna N.T."/>
            <person name="Plunkett G. III"/>
            <person name="Burland V."/>
            <person name="Mau B."/>
            <person name="Glasner J.D."/>
            <person name="Rose D.J."/>
            <person name="Mayhew G.F."/>
            <person name="Evans P.S."/>
            <person name="Gregor J."/>
            <person name="Kirkpatrick H.A."/>
            <person name="Posfai G."/>
            <person name="Hackett J."/>
            <person name="Klink S."/>
            <person name="Boutin A."/>
            <person name="Shao Y."/>
            <person name="Miller L."/>
            <person name="Grotbeck E.J."/>
            <person name="Davis N.W."/>
            <person name="Lim A."/>
            <person name="Dimalanta E.T."/>
            <person name="Potamousis K."/>
            <person name="Apodaca J."/>
            <person name="Anantharaman T.S."/>
            <person name="Lin J."/>
            <person name="Yen G."/>
            <person name="Schwartz D.C."/>
            <person name="Welch R.A."/>
            <person name="Blattner F.R."/>
        </authorList>
    </citation>
    <scope>NUCLEOTIDE SEQUENCE [LARGE SCALE GENOMIC DNA]</scope>
    <source>
        <strain>O157:H7 / EDL933 / ATCC 700927 / EHEC</strain>
    </source>
</reference>
<reference key="2">
    <citation type="journal article" date="2001" name="DNA Res.">
        <title>Complete genome sequence of enterohemorrhagic Escherichia coli O157:H7 and genomic comparison with a laboratory strain K-12.</title>
        <authorList>
            <person name="Hayashi T."/>
            <person name="Makino K."/>
            <person name="Ohnishi M."/>
            <person name="Kurokawa K."/>
            <person name="Ishii K."/>
            <person name="Yokoyama K."/>
            <person name="Han C.-G."/>
            <person name="Ohtsubo E."/>
            <person name="Nakayama K."/>
            <person name="Murata T."/>
            <person name="Tanaka M."/>
            <person name="Tobe T."/>
            <person name="Iida T."/>
            <person name="Takami H."/>
            <person name="Honda T."/>
            <person name="Sasakawa C."/>
            <person name="Ogasawara N."/>
            <person name="Yasunaga T."/>
            <person name="Kuhara S."/>
            <person name="Shiba T."/>
            <person name="Hattori M."/>
            <person name="Shinagawa H."/>
        </authorList>
    </citation>
    <scope>NUCLEOTIDE SEQUENCE [LARGE SCALE GENOMIC DNA]</scope>
    <source>
        <strain>O157:H7 / Sakai / RIMD 0509952 / EHEC</strain>
    </source>
</reference>
<name>CYSD_ECO57</name>
<evidence type="ECO:0000255" key="1">
    <source>
        <dbReference type="HAMAP-Rule" id="MF_00064"/>
    </source>
</evidence>
<evidence type="ECO:0000305" key="2"/>
<keyword id="KW-0067">ATP-binding</keyword>
<keyword id="KW-0547">Nucleotide-binding</keyword>
<keyword id="KW-0548">Nucleotidyltransferase</keyword>
<keyword id="KW-1185">Reference proteome</keyword>
<keyword id="KW-0808">Transferase</keyword>
<gene>
    <name evidence="1" type="primary">cysD</name>
    <name type="ordered locus">Z4060</name>
    <name type="ordered locus">ECs3606</name>
</gene>
<organism>
    <name type="scientific">Escherichia coli O157:H7</name>
    <dbReference type="NCBI Taxonomy" id="83334"/>
    <lineage>
        <taxon>Bacteria</taxon>
        <taxon>Pseudomonadati</taxon>
        <taxon>Pseudomonadota</taxon>
        <taxon>Gammaproteobacteria</taxon>
        <taxon>Enterobacterales</taxon>
        <taxon>Enterobacteriaceae</taxon>
        <taxon>Escherichia</taxon>
    </lineage>
</organism>
<comment type="function">
    <text evidence="1">With CysN forms the ATP sulfurylase (ATPS) that catalyzes the adenylation of sulfate producing adenosine 5'-phosphosulfate (APS) and diphosphate, the first enzymatic step in sulfur assimilation pathway. APS synthesis involves the formation of a high-energy phosphoric-sulfuric acid anhydride bond driven by GTP hydrolysis by CysN coupled to ATP hydrolysis by CysD.</text>
</comment>
<comment type="catalytic activity">
    <reaction evidence="1">
        <text>sulfate + ATP + H(+) = adenosine 5'-phosphosulfate + diphosphate</text>
        <dbReference type="Rhea" id="RHEA:18133"/>
        <dbReference type="ChEBI" id="CHEBI:15378"/>
        <dbReference type="ChEBI" id="CHEBI:16189"/>
        <dbReference type="ChEBI" id="CHEBI:30616"/>
        <dbReference type="ChEBI" id="CHEBI:33019"/>
        <dbReference type="ChEBI" id="CHEBI:58243"/>
        <dbReference type="EC" id="2.7.7.4"/>
    </reaction>
</comment>
<comment type="pathway">
    <text evidence="1">Sulfur metabolism; hydrogen sulfide biosynthesis; sulfite from sulfate: step 1/3.</text>
</comment>
<comment type="subunit">
    <text evidence="1">Heterodimer composed of CysD, the smaller subunit, and CysN.</text>
</comment>
<comment type="similarity">
    <text evidence="1 2">Belongs to the PAPS reductase family. CysD subfamily.</text>
</comment>
<proteinExistence type="inferred from homology"/>
<feature type="chain" id="PRO_0000100666" description="Sulfate adenylyltransferase subunit 2">
    <location>
        <begin position="1"/>
        <end position="302"/>
    </location>
</feature>